<feature type="chain" id="PRO_0000387106" description="Ribosomal RNA small subunit methyltransferase H">
    <location>
        <begin position="1"/>
        <end position="313"/>
    </location>
</feature>
<feature type="binding site" evidence="1">
    <location>
        <begin position="35"/>
        <end position="37"/>
    </location>
    <ligand>
        <name>S-adenosyl-L-methionine</name>
        <dbReference type="ChEBI" id="CHEBI:59789"/>
    </ligand>
</feature>
<feature type="binding site" evidence="1">
    <location>
        <position position="55"/>
    </location>
    <ligand>
        <name>S-adenosyl-L-methionine</name>
        <dbReference type="ChEBI" id="CHEBI:59789"/>
    </ligand>
</feature>
<feature type="binding site" evidence="1">
    <location>
        <position position="79"/>
    </location>
    <ligand>
        <name>S-adenosyl-L-methionine</name>
        <dbReference type="ChEBI" id="CHEBI:59789"/>
    </ligand>
</feature>
<feature type="binding site" evidence="1">
    <location>
        <position position="101"/>
    </location>
    <ligand>
        <name>S-adenosyl-L-methionine</name>
        <dbReference type="ChEBI" id="CHEBI:59789"/>
    </ligand>
</feature>
<feature type="binding site" evidence="1">
    <location>
        <position position="108"/>
    </location>
    <ligand>
        <name>S-adenosyl-L-methionine</name>
        <dbReference type="ChEBI" id="CHEBI:59789"/>
    </ligand>
</feature>
<comment type="function">
    <text evidence="1">Specifically methylates the N4 position of cytidine in position 1402 (C1402) of 16S rRNA.</text>
</comment>
<comment type="catalytic activity">
    <reaction evidence="1">
        <text>cytidine(1402) in 16S rRNA + S-adenosyl-L-methionine = N(4)-methylcytidine(1402) in 16S rRNA + S-adenosyl-L-homocysteine + H(+)</text>
        <dbReference type="Rhea" id="RHEA:42928"/>
        <dbReference type="Rhea" id="RHEA-COMP:10286"/>
        <dbReference type="Rhea" id="RHEA-COMP:10287"/>
        <dbReference type="ChEBI" id="CHEBI:15378"/>
        <dbReference type="ChEBI" id="CHEBI:57856"/>
        <dbReference type="ChEBI" id="CHEBI:59789"/>
        <dbReference type="ChEBI" id="CHEBI:74506"/>
        <dbReference type="ChEBI" id="CHEBI:82748"/>
        <dbReference type="EC" id="2.1.1.199"/>
    </reaction>
</comment>
<comment type="subcellular location">
    <subcellularLocation>
        <location evidence="1">Cytoplasm</location>
    </subcellularLocation>
</comment>
<comment type="similarity">
    <text evidence="1">Belongs to the methyltransferase superfamily. RsmH family.</text>
</comment>
<protein>
    <recommendedName>
        <fullName evidence="1">Ribosomal RNA small subunit methyltransferase H</fullName>
        <ecNumber evidence="1">2.1.1.199</ecNumber>
    </recommendedName>
    <alternativeName>
        <fullName evidence="1">16S rRNA m(4)C1402 methyltransferase</fullName>
    </alternativeName>
    <alternativeName>
        <fullName evidence="1">rRNA (cytosine-N(4)-)-methyltransferase RsmH</fullName>
    </alternativeName>
</protein>
<organism>
    <name type="scientific">Salmonella paratyphi C (strain RKS4594)</name>
    <dbReference type="NCBI Taxonomy" id="476213"/>
    <lineage>
        <taxon>Bacteria</taxon>
        <taxon>Pseudomonadati</taxon>
        <taxon>Pseudomonadota</taxon>
        <taxon>Gammaproteobacteria</taxon>
        <taxon>Enterobacterales</taxon>
        <taxon>Enterobacteriaceae</taxon>
        <taxon>Salmonella</taxon>
    </lineage>
</organism>
<accession>C0Q5H8</accession>
<keyword id="KW-0963">Cytoplasm</keyword>
<keyword id="KW-0489">Methyltransferase</keyword>
<keyword id="KW-0698">rRNA processing</keyword>
<keyword id="KW-0949">S-adenosyl-L-methionine</keyword>
<keyword id="KW-0808">Transferase</keyword>
<sequence>MMENFKHTTVLLDEAVNGLNIRPDGIYIDGTFGRGGHSRLILSQLGEEGRLLAIDRDPQAIAVAQTINDPRFSIIHGPFSALADYVAERELTGKIDGILLDLGVSSPQLDDAERGFSFMRDGPLDMRMDPTRGQSAAEWLQTAEEADIAWVLKTFGEERFAKRIARAIVERNREQPMTRTKELAEVVAAATPVKDKFKHPATRTFQAVRIWVNSELEEIEQALKSSLSVLAPGGRLSIISFHSLEDRIVKRFMREQSRGPQVPAGLPMTEAQLKKLGGRELRALGKLMPGEKEVAENPRARSSVLRIAERTNA</sequence>
<evidence type="ECO:0000255" key="1">
    <source>
        <dbReference type="HAMAP-Rule" id="MF_01007"/>
    </source>
</evidence>
<gene>
    <name evidence="1" type="primary">rsmH</name>
    <name type="synonym">mraW</name>
    <name type="ordered locus">SPC_0129</name>
</gene>
<proteinExistence type="inferred from homology"/>
<dbReference type="EC" id="2.1.1.199" evidence="1"/>
<dbReference type="EMBL" id="CP000857">
    <property type="protein sequence ID" value="ACN44320.1"/>
    <property type="molecule type" value="Genomic_DNA"/>
</dbReference>
<dbReference type="RefSeq" id="WP_000970444.1">
    <property type="nucleotide sequence ID" value="NC_012125.1"/>
</dbReference>
<dbReference type="SMR" id="C0Q5H8"/>
<dbReference type="KEGG" id="sei:SPC_0129"/>
<dbReference type="HOGENOM" id="CLU_038422_2_0_6"/>
<dbReference type="Proteomes" id="UP000001599">
    <property type="component" value="Chromosome"/>
</dbReference>
<dbReference type="GO" id="GO:0005737">
    <property type="term" value="C:cytoplasm"/>
    <property type="evidence" value="ECO:0007669"/>
    <property type="project" value="UniProtKB-SubCell"/>
</dbReference>
<dbReference type="GO" id="GO:0071424">
    <property type="term" value="F:rRNA (cytosine-N4-)-methyltransferase activity"/>
    <property type="evidence" value="ECO:0007669"/>
    <property type="project" value="UniProtKB-UniRule"/>
</dbReference>
<dbReference type="GO" id="GO:0070475">
    <property type="term" value="P:rRNA base methylation"/>
    <property type="evidence" value="ECO:0007669"/>
    <property type="project" value="UniProtKB-UniRule"/>
</dbReference>
<dbReference type="FunFam" id="1.10.150.170:FF:000001">
    <property type="entry name" value="Ribosomal RNA small subunit methyltransferase H"/>
    <property type="match status" value="1"/>
</dbReference>
<dbReference type="Gene3D" id="1.10.150.170">
    <property type="entry name" value="Putative methyltransferase TM0872, insert domain"/>
    <property type="match status" value="1"/>
</dbReference>
<dbReference type="Gene3D" id="3.40.50.150">
    <property type="entry name" value="Vaccinia Virus protein VP39"/>
    <property type="match status" value="1"/>
</dbReference>
<dbReference type="HAMAP" id="MF_01007">
    <property type="entry name" value="16SrRNA_methyltr_H"/>
    <property type="match status" value="1"/>
</dbReference>
<dbReference type="InterPro" id="IPR002903">
    <property type="entry name" value="RsmH"/>
</dbReference>
<dbReference type="InterPro" id="IPR023397">
    <property type="entry name" value="SAM-dep_MeTrfase_MraW_recog"/>
</dbReference>
<dbReference type="InterPro" id="IPR029063">
    <property type="entry name" value="SAM-dependent_MTases_sf"/>
</dbReference>
<dbReference type="NCBIfam" id="TIGR00006">
    <property type="entry name" value="16S rRNA (cytosine(1402)-N(4))-methyltransferase RsmH"/>
    <property type="match status" value="1"/>
</dbReference>
<dbReference type="PANTHER" id="PTHR11265:SF0">
    <property type="entry name" value="12S RRNA N4-METHYLCYTIDINE METHYLTRANSFERASE"/>
    <property type="match status" value="1"/>
</dbReference>
<dbReference type="PANTHER" id="PTHR11265">
    <property type="entry name" value="S-ADENOSYL-METHYLTRANSFERASE MRAW"/>
    <property type="match status" value="1"/>
</dbReference>
<dbReference type="Pfam" id="PF01795">
    <property type="entry name" value="Methyltransf_5"/>
    <property type="match status" value="1"/>
</dbReference>
<dbReference type="PIRSF" id="PIRSF004486">
    <property type="entry name" value="MraW"/>
    <property type="match status" value="1"/>
</dbReference>
<dbReference type="SUPFAM" id="SSF81799">
    <property type="entry name" value="Putative methyltransferase TM0872, insert domain"/>
    <property type="match status" value="1"/>
</dbReference>
<dbReference type="SUPFAM" id="SSF53335">
    <property type="entry name" value="S-adenosyl-L-methionine-dependent methyltransferases"/>
    <property type="match status" value="1"/>
</dbReference>
<reference key="1">
    <citation type="journal article" date="2009" name="PLoS ONE">
        <title>Salmonella paratyphi C: genetic divergence from Salmonella choleraesuis and pathogenic convergence with Salmonella typhi.</title>
        <authorList>
            <person name="Liu W.-Q."/>
            <person name="Feng Y."/>
            <person name="Wang Y."/>
            <person name="Zou Q.-H."/>
            <person name="Chen F."/>
            <person name="Guo J.-T."/>
            <person name="Peng Y.-H."/>
            <person name="Jin Y."/>
            <person name="Li Y.-G."/>
            <person name="Hu S.-N."/>
            <person name="Johnston R.N."/>
            <person name="Liu G.-R."/>
            <person name="Liu S.-L."/>
        </authorList>
    </citation>
    <scope>NUCLEOTIDE SEQUENCE [LARGE SCALE GENOMIC DNA]</scope>
    <source>
        <strain>RKS4594</strain>
    </source>
</reference>
<name>RSMH_SALPC</name>